<gene>
    <name type="ordered locus">At1g54790</name>
    <name type="ORF">T22H22.20</name>
</gene>
<sequence>MNITKMKLFYVILFFISSLQISNSIDFNYPSAFNFGDSNSDTGDLVAGLGIRLDLPNGQNSFKTSSQRFCDGRLVIDFLMDEMDLPFLNPYLDSLGLPNFKKGCNFAAAGSTILPANPTSVSPFSFDLQISQFIRFKSRAIELLSKTGRKYEKYLPPIDYYSKGLYMIDIGQNDIAGAFYSKTLDQVLASIPSILETFEAGLKRLYEEGGRNIWIHNTGPLGCLAQNIAKFGTDSTKLDEFGCVSSHNQAAKLFNLQLHAMSNKFQAQYPDANVTYVDIFSIKSNLIANYSRFGKHFTKPLIDLNHLENVGYNKILNVLGFEKPLMACCGVGGAPLNYDSRITCGQTKVLDGISVTAKACNDSSEYINWDGIHYTEAANEFVSSQILTGKYSDPPFSDQMPFFLTLKF</sequence>
<dbReference type="EC" id="3.1.1.-"/>
<dbReference type="EMBL" id="AC005388">
    <property type="protein sequence ID" value="AAC64890.1"/>
    <property type="status" value="ALT_SEQ"/>
    <property type="molecule type" value="Genomic_DNA"/>
</dbReference>
<dbReference type="EMBL" id="CP002684">
    <property type="protein sequence ID" value="AEE33147.1"/>
    <property type="molecule type" value="Genomic_DNA"/>
</dbReference>
<dbReference type="EMBL" id="CP002684">
    <property type="protein sequence ID" value="AEE33148.1"/>
    <property type="molecule type" value="Genomic_DNA"/>
</dbReference>
<dbReference type="EMBL" id="AK118209">
    <property type="protein sequence ID" value="BAC42831.1"/>
    <property type="molecule type" value="mRNA"/>
</dbReference>
<dbReference type="EMBL" id="BT005698">
    <property type="protein sequence ID" value="AAO64118.1"/>
    <property type="molecule type" value="mRNA"/>
</dbReference>
<dbReference type="EMBL" id="AY084964">
    <property type="protein sequence ID" value="AAM61525.1"/>
    <property type="status" value="ALT_INIT"/>
    <property type="molecule type" value="mRNA"/>
</dbReference>
<dbReference type="EMBL" id="BX842537">
    <property type="status" value="NOT_ANNOTATED_CDS"/>
    <property type="molecule type" value="mRNA"/>
</dbReference>
<dbReference type="PIR" id="A96590">
    <property type="entry name" value="A96590"/>
</dbReference>
<dbReference type="RefSeq" id="NP_001185228.1">
    <property type="nucleotide sequence ID" value="NM_001198299.1"/>
</dbReference>
<dbReference type="RefSeq" id="NP_564668.1">
    <molecule id="Q3ECP6-2"/>
    <property type="nucleotide sequence ID" value="NM_104354.4"/>
</dbReference>
<dbReference type="RefSeq" id="NP_974029.1">
    <molecule id="Q3ECP6-1"/>
    <property type="nucleotide sequence ID" value="NM_202300.2"/>
</dbReference>
<dbReference type="FunCoup" id="Q3ECP6">
    <property type="interactions" value="103"/>
</dbReference>
<dbReference type="STRING" id="3702.Q3ECP6"/>
<dbReference type="GlyGen" id="Q3ECP6">
    <property type="glycosylation" value="3 sites"/>
</dbReference>
<dbReference type="PaxDb" id="3702-AT1G54790.2"/>
<dbReference type="ProteomicsDB" id="247087">
    <molecule id="Q3ECP6-1"/>
</dbReference>
<dbReference type="EnsemblPlants" id="AT1G54790.1">
    <molecule id="Q3ECP6-2"/>
    <property type="protein sequence ID" value="AT1G54790.1"/>
    <property type="gene ID" value="AT1G54790"/>
</dbReference>
<dbReference type="EnsemblPlants" id="AT1G54790.2">
    <molecule id="Q3ECP6-1"/>
    <property type="protein sequence ID" value="AT1G54790.2"/>
    <property type="gene ID" value="AT1G54790"/>
</dbReference>
<dbReference type="GeneID" id="841920"/>
<dbReference type="Gramene" id="AT1G54790.1">
    <molecule id="Q3ECP6-2"/>
    <property type="protein sequence ID" value="AT1G54790.1"/>
    <property type="gene ID" value="AT1G54790"/>
</dbReference>
<dbReference type="Gramene" id="AT1G54790.2">
    <molecule id="Q3ECP6-1"/>
    <property type="protein sequence ID" value="AT1G54790.2"/>
    <property type="gene ID" value="AT1G54790"/>
</dbReference>
<dbReference type="KEGG" id="ath:AT1G54790"/>
<dbReference type="Araport" id="AT1G54790"/>
<dbReference type="TAIR" id="AT1G54790"/>
<dbReference type="eggNOG" id="ENOG502QRTJ">
    <property type="taxonomic scope" value="Eukaryota"/>
</dbReference>
<dbReference type="InParanoid" id="Q3ECP6"/>
<dbReference type="OrthoDB" id="1600564at2759"/>
<dbReference type="PhylomeDB" id="Q3ECP6"/>
<dbReference type="BioCyc" id="ARA:AT1G54790-MONOMER"/>
<dbReference type="PRO" id="PR:Q3ECP6"/>
<dbReference type="Proteomes" id="UP000006548">
    <property type="component" value="Chromosome 1"/>
</dbReference>
<dbReference type="ExpressionAtlas" id="Q3ECP6">
    <property type="expression patterns" value="baseline and differential"/>
</dbReference>
<dbReference type="GO" id="GO:0005576">
    <property type="term" value="C:extracellular region"/>
    <property type="evidence" value="ECO:0007669"/>
    <property type="project" value="UniProtKB-SubCell"/>
</dbReference>
<dbReference type="GO" id="GO:0016788">
    <property type="term" value="F:hydrolase activity, acting on ester bonds"/>
    <property type="evidence" value="ECO:0007669"/>
    <property type="project" value="InterPro"/>
</dbReference>
<dbReference type="GO" id="GO:0016042">
    <property type="term" value="P:lipid catabolic process"/>
    <property type="evidence" value="ECO:0007669"/>
    <property type="project" value="UniProtKB-KW"/>
</dbReference>
<dbReference type="CDD" id="cd01837">
    <property type="entry name" value="SGNH_plant_lipase_like"/>
    <property type="match status" value="1"/>
</dbReference>
<dbReference type="Gene3D" id="3.40.50.1110">
    <property type="entry name" value="SGNH hydrolase"/>
    <property type="match status" value="1"/>
</dbReference>
<dbReference type="InterPro" id="IPR001087">
    <property type="entry name" value="GDSL"/>
</dbReference>
<dbReference type="InterPro" id="IPR036514">
    <property type="entry name" value="SGNH_hydro_sf"/>
</dbReference>
<dbReference type="InterPro" id="IPR035669">
    <property type="entry name" value="SGNH_plant_lipase-like"/>
</dbReference>
<dbReference type="PANTHER" id="PTHR22835:SF536">
    <property type="entry name" value="OS05G0401000 PROTEIN"/>
    <property type="match status" value="1"/>
</dbReference>
<dbReference type="PANTHER" id="PTHR22835">
    <property type="entry name" value="ZINC FINGER FYVE DOMAIN CONTAINING PROTEIN"/>
    <property type="match status" value="1"/>
</dbReference>
<dbReference type="Pfam" id="PF00657">
    <property type="entry name" value="Lipase_GDSL"/>
    <property type="match status" value="1"/>
</dbReference>
<accession>Q3ECP6</accession>
<accession>Q8GXJ3</accession>
<accession>Q8LFA1</accession>
<accession>Q9ZVL5</accession>
<comment type="subcellular location">
    <subcellularLocation>
        <location evidence="6">Secreted</location>
    </subcellularLocation>
</comment>
<comment type="alternative products">
    <event type="alternative splicing"/>
    <isoform>
        <id>Q3ECP6-1</id>
        <name>1</name>
        <sequence type="displayed"/>
    </isoform>
    <isoform>
        <id>Q3ECP6-2</id>
        <name>2</name>
        <sequence type="described" ref="VSP_036693"/>
    </isoform>
</comment>
<comment type="similarity">
    <text evidence="6">Belongs to the 'GDSL' lipolytic enzyme family.</text>
</comment>
<comment type="sequence caution" evidence="6">
    <conflict type="erroneous initiation">
        <sequence resource="EMBL-CDS" id="AAM61525"/>
    </conflict>
</comment>
<comment type="sequence caution" evidence="6">
    <conflict type="frameshift">
        <sequence resource="EMBL" id="BX842537"/>
    </conflict>
</comment>
<organism>
    <name type="scientific">Arabidopsis thaliana</name>
    <name type="common">Mouse-ear cress</name>
    <dbReference type="NCBI Taxonomy" id="3702"/>
    <lineage>
        <taxon>Eukaryota</taxon>
        <taxon>Viridiplantae</taxon>
        <taxon>Streptophyta</taxon>
        <taxon>Embryophyta</taxon>
        <taxon>Tracheophyta</taxon>
        <taxon>Spermatophyta</taxon>
        <taxon>Magnoliopsida</taxon>
        <taxon>eudicotyledons</taxon>
        <taxon>Gunneridae</taxon>
        <taxon>Pentapetalae</taxon>
        <taxon>rosids</taxon>
        <taxon>malvids</taxon>
        <taxon>Brassicales</taxon>
        <taxon>Brassicaceae</taxon>
        <taxon>Camelineae</taxon>
        <taxon>Arabidopsis</taxon>
    </lineage>
</organism>
<evidence type="ECO:0000250" key="1"/>
<evidence type="ECO:0000255" key="2"/>
<evidence type="ECO:0000303" key="3">
    <source>
    </source>
</evidence>
<evidence type="ECO:0000303" key="4">
    <source>
    </source>
</evidence>
<evidence type="ECO:0000303" key="5">
    <source ref="5"/>
</evidence>
<evidence type="ECO:0000305" key="6"/>
<feature type="signal peptide" evidence="2">
    <location>
        <begin position="1"/>
        <end position="24"/>
    </location>
</feature>
<feature type="chain" id="PRO_0000367364" description="GDSL esterase/lipase At1g54790">
    <location>
        <begin position="25"/>
        <end position="408"/>
    </location>
</feature>
<feature type="active site" description="Nucleophile" evidence="1">
    <location>
        <position position="38"/>
    </location>
</feature>
<feature type="active site" evidence="1">
    <location>
        <position position="370"/>
    </location>
</feature>
<feature type="active site" evidence="1">
    <location>
        <position position="373"/>
    </location>
</feature>
<feature type="glycosylation site" description="N-linked (GlcNAc...) asparagine" evidence="2">
    <location>
        <position position="273"/>
    </location>
</feature>
<feature type="glycosylation site" description="N-linked (GlcNAc...) asparagine" evidence="2">
    <location>
        <position position="289"/>
    </location>
</feature>
<feature type="glycosylation site" description="N-linked (GlcNAc...) asparagine" evidence="2">
    <location>
        <position position="361"/>
    </location>
</feature>
<feature type="splice variant" id="VSP_036693" description="In isoform 2." evidence="3 4 5">
    <location>
        <begin position="295"/>
        <end position="320"/>
    </location>
</feature>
<feature type="sequence conflict" description="In Ref. 5; AAM61525." evidence="6" ref="5">
    <original>N</original>
    <variation>K</variation>
    <location>
        <position position="2"/>
    </location>
</feature>
<proteinExistence type="evidence at transcript level"/>
<keyword id="KW-0025">Alternative splicing</keyword>
<keyword id="KW-0325">Glycoprotein</keyword>
<keyword id="KW-0378">Hydrolase</keyword>
<keyword id="KW-0442">Lipid degradation</keyword>
<keyword id="KW-0443">Lipid metabolism</keyword>
<keyword id="KW-1185">Reference proteome</keyword>
<keyword id="KW-0964">Secreted</keyword>
<keyword id="KW-0732">Signal</keyword>
<protein>
    <recommendedName>
        <fullName>GDSL esterase/lipase At1g54790</fullName>
        <ecNumber>3.1.1.-</ecNumber>
    </recommendedName>
    <alternativeName>
        <fullName>Extracellular lipase At1g54790</fullName>
    </alternativeName>
</protein>
<reference key="1">
    <citation type="journal article" date="2000" name="Nature">
        <title>Sequence and analysis of chromosome 1 of the plant Arabidopsis thaliana.</title>
        <authorList>
            <person name="Theologis A."/>
            <person name="Ecker J.R."/>
            <person name="Palm C.J."/>
            <person name="Federspiel N.A."/>
            <person name="Kaul S."/>
            <person name="White O."/>
            <person name="Alonso J."/>
            <person name="Altafi H."/>
            <person name="Araujo R."/>
            <person name="Bowman C.L."/>
            <person name="Brooks S.Y."/>
            <person name="Buehler E."/>
            <person name="Chan A."/>
            <person name="Chao Q."/>
            <person name="Chen H."/>
            <person name="Cheuk R.F."/>
            <person name="Chin C.W."/>
            <person name="Chung M.K."/>
            <person name="Conn L."/>
            <person name="Conway A.B."/>
            <person name="Conway A.R."/>
            <person name="Creasy T.H."/>
            <person name="Dewar K."/>
            <person name="Dunn P."/>
            <person name="Etgu P."/>
            <person name="Feldblyum T.V."/>
            <person name="Feng J.-D."/>
            <person name="Fong B."/>
            <person name="Fujii C.Y."/>
            <person name="Gill J.E."/>
            <person name="Goldsmith A.D."/>
            <person name="Haas B."/>
            <person name="Hansen N.F."/>
            <person name="Hughes B."/>
            <person name="Huizar L."/>
            <person name="Hunter J.L."/>
            <person name="Jenkins J."/>
            <person name="Johnson-Hopson C."/>
            <person name="Khan S."/>
            <person name="Khaykin E."/>
            <person name="Kim C.J."/>
            <person name="Koo H.L."/>
            <person name="Kremenetskaia I."/>
            <person name="Kurtz D.B."/>
            <person name="Kwan A."/>
            <person name="Lam B."/>
            <person name="Langin-Hooper S."/>
            <person name="Lee A."/>
            <person name="Lee J.M."/>
            <person name="Lenz C.A."/>
            <person name="Li J.H."/>
            <person name="Li Y.-P."/>
            <person name="Lin X."/>
            <person name="Liu S.X."/>
            <person name="Liu Z.A."/>
            <person name="Luros J.S."/>
            <person name="Maiti R."/>
            <person name="Marziali A."/>
            <person name="Militscher J."/>
            <person name="Miranda M."/>
            <person name="Nguyen M."/>
            <person name="Nierman W.C."/>
            <person name="Osborne B.I."/>
            <person name="Pai G."/>
            <person name="Peterson J."/>
            <person name="Pham P.K."/>
            <person name="Rizzo M."/>
            <person name="Rooney T."/>
            <person name="Rowley D."/>
            <person name="Sakano H."/>
            <person name="Salzberg S.L."/>
            <person name="Schwartz J.R."/>
            <person name="Shinn P."/>
            <person name="Southwick A.M."/>
            <person name="Sun H."/>
            <person name="Tallon L.J."/>
            <person name="Tambunga G."/>
            <person name="Toriumi M.J."/>
            <person name="Town C.D."/>
            <person name="Utterback T."/>
            <person name="Van Aken S."/>
            <person name="Vaysberg M."/>
            <person name="Vysotskaia V.S."/>
            <person name="Walker M."/>
            <person name="Wu D."/>
            <person name="Yu G."/>
            <person name="Fraser C.M."/>
            <person name="Venter J.C."/>
            <person name="Davis R.W."/>
        </authorList>
    </citation>
    <scope>NUCLEOTIDE SEQUENCE [LARGE SCALE GENOMIC DNA]</scope>
    <source>
        <strain>cv. Columbia</strain>
    </source>
</reference>
<reference key="2">
    <citation type="journal article" date="2017" name="Plant J.">
        <title>Araport11: a complete reannotation of the Arabidopsis thaliana reference genome.</title>
        <authorList>
            <person name="Cheng C.Y."/>
            <person name="Krishnakumar V."/>
            <person name="Chan A.P."/>
            <person name="Thibaud-Nissen F."/>
            <person name="Schobel S."/>
            <person name="Town C.D."/>
        </authorList>
    </citation>
    <scope>GENOME REANNOTATION</scope>
    <source>
        <strain>cv. Columbia</strain>
    </source>
</reference>
<reference key="3">
    <citation type="journal article" date="2002" name="Science">
        <title>Functional annotation of a full-length Arabidopsis cDNA collection.</title>
        <authorList>
            <person name="Seki M."/>
            <person name="Narusaka M."/>
            <person name="Kamiya A."/>
            <person name="Ishida J."/>
            <person name="Satou M."/>
            <person name="Sakurai T."/>
            <person name="Nakajima M."/>
            <person name="Enju A."/>
            <person name="Akiyama K."/>
            <person name="Oono Y."/>
            <person name="Muramatsu M."/>
            <person name="Hayashizaki Y."/>
            <person name="Kawai J."/>
            <person name="Carninci P."/>
            <person name="Itoh M."/>
            <person name="Ishii Y."/>
            <person name="Arakawa T."/>
            <person name="Shibata K."/>
            <person name="Shinagawa A."/>
            <person name="Shinozaki K."/>
        </authorList>
    </citation>
    <scope>NUCLEOTIDE SEQUENCE [LARGE SCALE MRNA] (ISOFORM 2)</scope>
    <source>
        <strain>cv. Columbia</strain>
    </source>
</reference>
<reference key="4">
    <citation type="journal article" date="2003" name="Science">
        <title>Empirical analysis of transcriptional activity in the Arabidopsis genome.</title>
        <authorList>
            <person name="Yamada K."/>
            <person name="Lim J."/>
            <person name="Dale J.M."/>
            <person name="Chen H."/>
            <person name="Shinn P."/>
            <person name="Palm C.J."/>
            <person name="Southwick A.M."/>
            <person name="Wu H.C."/>
            <person name="Kim C.J."/>
            <person name="Nguyen M."/>
            <person name="Pham P.K."/>
            <person name="Cheuk R.F."/>
            <person name="Karlin-Newmann G."/>
            <person name="Liu S.X."/>
            <person name="Lam B."/>
            <person name="Sakano H."/>
            <person name="Wu T."/>
            <person name="Yu G."/>
            <person name="Miranda M."/>
            <person name="Quach H.L."/>
            <person name="Tripp M."/>
            <person name="Chang C.H."/>
            <person name="Lee J.M."/>
            <person name="Toriumi M.J."/>
            <person name="Chan M.M."/>
            <person name="Tang C.C."/>
            <person name="Onodera C.S."/>
            <person name="Deng J.M."/>
            <person name="Akiyama K."/>
            <person name="Ansari Y."/>
            <person name="Arakawa T."/>
            <person name="Banh J."/>
            <person name="Banno F."/>
            <person name="Bowser L."/>
            <person name="Brooks S.Y."/>
            <person name="Carninci P."/>
            <person name="Chao Q."/>
            <person name="Choy N."/>
            <person name="Enju A."/>
            <person name="Goldsmith A.D."/>
            <person name="Gurjal M."/>
            <person name="Hansen N.F."/>
            <person name="Hayashizaki Y."/>
            <person name="Johnson-Hopson C."/>
            <person name="Hsuan V.W."/>
            <person name="Iida K."/>
            <person name="Karnes M."/>
            <person name="Khan S."/>
            <person name="Koesema E."/>
            <person name="Ishida J."/>
            <person name="Jiang P.X."/>
            <person name="Jones T."/>
            <person name="Kawai J."/>
            <person name="Kamiya A."/>
            <person name="Meyers C."/>
            <person name="Nakajima M."/>
            <person name="Narusaka M."/>
            <person name="Seki M."/>
            <person name="Sakurai T."/>
            <person name="Satou M."/>
            <person name="Tamse R."/>
            <person name="Vaysberg M."/>
            <person name="Wallender E.K."/>
            <person name="Wong C."/>
            <person name="Yamamura Y."/>
            <person name="Yuan S."/>
            <person name="Shinozaki K."/>
            <person name="Davis R.W."/>
            <person name="Theologis A."/>
            <person name="Ecker J.R."/>
        </authorList>
    </citation>
    <scope>NUCLEOTIDE SEQUENCE [LARGE SCALE MRNA] (ISOFORM 2)</scope>
    <source>
        <strain>cv. Columbia</strain>
    </source>
</reference>
<reference key="5">
    <citation type="submission" date="2002-03" db="EMBL/GenBank/DDBJ databases">
        <title>Full-length cDNA from Arabidopsis thaliana.</title>
        <authorList>
            <person name="Brover V.V."/>
            <person name="Troukhan M.E."/>
            <person name="Alexandrov N.A."/>
            <person name="Lu Y.-P."/>
            <person name="Flavell R.B."/>
            <person name="Feldmann K.A."/>
        </authorList>
    </citation>
    <scope>NUCLEOTIDE SEQUENCE [LARGE SCALE MRNA] (ISOFORM 2)</scope>
</reference>
<reference key="6">
    <citation type="journal article" date="2004" name="Genome Res.">
        <title>Whole genome sequence comparisons and 'full-length' cDNA sequences: a combined approach to evaluate and improve Arabidopsis genome annotation.</title>
        <authorList>
            <person name="Castelli V."/>
            <person name="Aury J.-M."/>
            <person name="Jaillon O."/>
            <person name="Wincker P."/>
            <person name="Clepet C."/>
            <person name="Menard M."/>
            <person name="Cruaud C."/>
            <person name="Quetier F."/>
            <person name="Scarpelli C."/>
            <person name="Schaechter V."/>
            <person name="Temple G."/>
            <person name="Caboche M."/>
            <person name="Weissenbach J."/>
            <person name="Salanoubat M."/>
        </authorList>
    </citation>
    <scope>NUCLEOTIDE SEQUENCE [LARGE SCALE MRNA] OF 1-406 (ISOFORM 1)</scope>
    <source>
        <strain>cv. Columbia</strain>
    </source>
</reference>
<reference key="7">
    <citation type="journal article" date="2004" name="Prog. Lipid Res.">
        <title>GDSL family of serine esterases/lipases.</title>
        <authorList>
            <person name="Akoh C.C."/>
            <person name="Lee G.-C."/>
            <person name="Liaw Y.-C."/>
            <person name="Huang T.-H."/>
            <person name="Shaw J.-F."/>
        </authorList>
    </citation>
    <scope>REVIEW</scope>
</reference>
<reference key="8">
    <citation type="journal article" date="2008" name="Pak. J. Biol. Sci.">
        <title>Sequence analysis of GDSL lipase gene family in Arabidopsis thaliana.</title>
        <authorList>
            <person name="Ling H."/>
        </authorList>
    </citation>
    <scope>GENE FAMILY</scope>
</reference>
<name>GDL22_ARATH</name>